<comment type="function">
    <text evidence="1">Specifically methylates guanosine-37 in various tRNAs.</text>
</comment>
<comment type="catalytic activity">
    <reaction evidence="1">
        <text>guanosine(37) in tRNA + S-adenosyl-L-methionine = N(1)-methylguanosine(37) in tRNA + S-adenosyl-L-homocysteine + H(+)</text>
        <dbReference type="Rhea" id="RHEA:36899"/>
        <dbReference type="Rhea" id="RHEA-COMP:10145"/>
        <dbReference type="Rhea" id="RHEA-COMP:10147"/>
        <dbReference type="ChEBI" id="CHEBI:15378"/>
        <dbReference type="ChEBI" id="CHEBI:57856"/>
        <dbReference type="ChEBI" id="CHEBI:59789"/>
        <dbReference type="ChEBI" id="CHEBI:73542"/>
        <dbReference type="ChEBI" id="CHEBI:74269"/>
        <dbReference type="EC" id="2.1.1.228"/>
    </reaction>
</comment>
<comment type="subunit">
    <text evidence="1">Homodimer.</text>
</comment>
<comment type="subcellular location">
    <subcellularLocation>
        <location evidence="1">Cytoplasm</location>
    </subcellularLocation>
</comment>
<comment type="similarity">
    <text evidence="1">Belongs to the RNA methyltransferase TrmD family.</text>
</comment>
<proteinExistence type="inferred from homology"/>
<feature type="chain" id="PRO_1000130188" description="tRNA (guanine-N(1)-)-methyltransferase">
    <location>
        <begin position="1"/>
        <end position="228"/>
    </location>
</feature>
<feature type="binding site" evidence="1">
    <location>
        <position position="108"/>
    </location>
    <ligand>
        <name>S-adenosyl-L-methionine</name>
        <dbReference type="ChEBI" id="CHEBI:59789"/>
    </ligand>
</feature>
<feature type="binding site" evidence="1">
    <location>
        <begin position="127"/>
        <end position="132"/>
    </location>
    <ligand>
        <name>S-adenosyl-L-methionine</name>
        <dbReference type="ChEBI" id="CHEBI:59789"/>
    </ligand>
</feature>
<reference key="1">
    <citation type="journal article" date="2008" name="Infect. Immun.">
        <title>Genome of Mycoplasma arthritidis.</title>
        <authorList>
            <person name="Dybvig K."/>
            <person name="Zuhua C."/>
            <person name="Lao P."/>
            <person name="Jordan D.S."/>
            <person name="French C.T."/>
            <person name="Tu A.H."/>
            <person name="Loraine A.E."/>
        </authorList>
    </citation>
    <scope>NUCLEOTIDE SEQUENCE [LARGE SCALE GENOMIC DNA]</scope>
    <source>
        <strain>158L3-1</strain>
    </source>
</reference>
<sequence>MKINILSLFPEYFKAFQENSMIAKAIKLGHLEINVINFRDFSKEKHQKVDDTVYGGGDGMLLQVEPIDLALESVPNSYKILLSPQGQVFNQTKAHELAKHQEITLVCGHYEGFDERVLEFVDEELSVGDFILTGGEIPAMLITEAVARLVPGVLKKGSHENESFEGDGLLDYPQYTKPAIYKGLKVPEVLLSGNHALIDRWRKEASYSKTLKNRKDILAKRKEKPHEN</sequence>
<protein>
    <recommendedName>
        <fullName evidence="1">tRNA (guanine-N(1)-)-methyltransferase</fullName>
        <ecNumber evidence="1">2.1.1.228</ecNumber>
    </recommendedName>
    <alternativeName>
        <fullName evidence="1">M1G-methyltransferase</fullName>
    </alternativeName>
    <alternativeName>
        <fullName evidence="1">tRNA [GM37] methyltransferase</fullName>
    </alternativeName>
</protein>
<dbReference type="EC" id="2.1.1.228" evidence="1"/>
<dbReference type="EMBL" id="CP001047">
    <property type="protein sequence ID" value="ACF07154.1"/>
    <property type="molecule type" value="Genomic_DNA"/>
</dbReference>
<dbReference type="RefSeq" id="WP_012498111.1">
    <property type="nucleotide sequence ID" value="NC_011025.1"/>
</dbReference>
<dbReference type="SMR" id="B3PMA2"/>
<dbReference type="STRING" id="243272.MARTH_orf246"/>
<dbReference type="KEGG" id="mat:MARTH_orf246"/>
<dbReference type="eggNOG" id="COG0336">
    <property type="taxonomic scope" value="Bacteria"/>
</dbReference>
<dbReference type="HOGENOM" id="CLU_047363_0_1_14"/>
<dbReference type="Proteomes" id="UP000008812">
    <property type="component" value="Chromosome"/>
</dbReference>
<dbReference type="GO" id="GO:0005829">
    <property type="term" value="C:cytosol"/>
    <property type="evidence" value="ECO:0007669"/>
    <property type="project" value="TreeGrafter"/>
</dbReference>
<dbReference type="GO" id="GO:0052906">
    <property type="term" value="F:tRNA (guanine(37)-N1)-methyltransferase activity"/>
    <property type="evidence" value="ECO:0007669"/>
    <property type="project" value="UniProtKB-UniRule"/>
</dbReference>
<dbReference type="GO" id="GO:0002939">
    <property type="term" value="P:tRNA N1-guanine methylation"/>
    <property type="evidence" value="ECO:0007669"/>
    <property type="project" value="TreeGrafter"/>
</dbReference>
<dbReference type="CDD" id="cd18080">
    <property type="entry name" value="TrmD-like"/>
    <property type="match status" value="1"/>
</dbReference>
<dbReference type="FunFam" id="3.40.1280.10:FF:000001">
    <property type="entry name" value="tRNA (guanine-N(1)-)-methyltransferase"/>
    <property type="match status" value="1"/>
</dbReference>
<dbReference type="Gene3D" id="3.40.1280.10">
    <property type="match status" value="1"/>
</dbReference>
<dbReference type="Gene3D" id="1.10.1270.20">
    <property type="entry name" value="tRNA(m1g37)methyltransferase, domain 2"/>
    <property type="match status" value="1"/>
</dbReference>
<dbReference type="HAMAP" id="MF_00605">
    <property type="entry name" value="TrmD"/>
    <property type="match status" value="1"/>
</dbReference>
<dbReference type="InterPro" id="IPR029028">
    <property type="entry name" value="Alpha/beta_knot_MTases"/>
</dbReference>
<dbReference type="InterPro" id="IPR023148">
    <property type="entry name" value="tRNA_m1G_MeTrfase_C_sf"/>
</dbReference>
<dbReference type="InterPro" id="IPR002649">
    <property type="entry name" value="tRNA_m1G_MeTrfase_TrmD"/>
</dbReference>
<dbReference type="InterPro" id="IPR029026">
    <property type="entry name" value="tRNA_m1G_MTases_N"/>
</dbReference>
<dbReference type="InterPro" id="IPR016009">
    <property type="entry name" value="tRNA_MeTrfase_TRMD/TRM10"/>
</dbReference>
<dbReference type="NCBIfam" id="NF000648">
    <property type="entry name" value="PRK00026.1"/>
    <property type="match status" value="1"/>
</dbReference>
<dbReference type="NCBIfam" id="TIGR00088">
    <property type="entry name" value="trmD"/>
    <property type="match status" value="1"/>
</dbReference>
<dbReference type="PANTHER" id="PTHR46417">
    <property type="entry name" value="TRNA (GUANINE-N(1)-)-METHYLTRANSFERASE"/>
    <property type="match status" value="1"/>
</dbReference>
<dbReference type="PANTHER" id="PTHR46417:SF1">
    <property type="entry name" value="TRNA (GUANINE-N(1)-)-METHYLTRANSFERASE"/>
    <property type="match status" value="1"/>
</dbReference>
<dbReference type="Pfam" id="PF01746">
    <property type="entry name" value="tRNA_m1G_MT"/>
    <property type="match status" value="1"/>
</dbReference>
<dbReference type="PIRSF" id="PIRSF000386">
    <property type="entry name" value="tRNA_mtase"/>
    <property type="match status" value="1"/>
</dbReference>
<dbReference type="SUPFAM" id="SSF75217">
    <property type="entry name" value="alpha/beta knot"/>
    <property type="match status" value="1"/>
</dbReference>
<keyword id="KW-0963">Cytoplasm</keyword>
<keyword id="KW-0489">Methyltransferase</keyword>
<keyword id="KW-1185">Reference proteome</keyword>
<keyword id="KW-0949">S-adenosyl-L-methionine</keyword>
<keyword id="KW-0808">Transferase</keyword>
<keyword id="KW-0819">tRNA processing</keyword>
<organism>
    <name type="scientific">Metamycoplasma arthritidis (strain 158L3-1)</name>
    <name type="common">Mycoplasma arthritidis</name>
    <dbReference type="NCBI Taxonomy" id="243272"/>
    <lineage>
        <taxon>Bacteria</taxon>
        <taxon>Bacillati</taxon>
        <taxon>Mycoplasmatota</taxon>
        <taxon>Mycoplasmoidales</taxon>
        <taxon>Metamycoplasmataceae</taxon>
        <taxon>Metamycoplasma</taxon>
    </lineage>
</organism>
<name>TRMD_META1</name>
<accession>B3PMA2</accession>
<gene>
    <name evidence="1" type="primary">trmD</name>
    <name type="ordered locus">MARTH_orf246</name>
</gene>
<evidence type="ECO:0000255" key="1">
    <source>
        <dbReference type="HAMAP-Rule" id="MF_00605"/>
    </source>
</evidence>